<keyword id="KW-0963">Cytoplasm</keyword>
<keyword id="KW-0489">Methyltransferase</keyword>
<keyword id="KW-0698">rRNA processing</keyword>
<keyword id="KW-0949">S-adenosyl-L-methionine</keyword>
<keyword id="KW-0808">Transferase</keyword>
<comment type="function">
    <text evidence="1">Specifically methylates the N4 position of cytidine in position 1402 (C1402) of 16S rRNA.</text>
</comment>
<comment type="catalytic activity">
    <reaction evidence="1">
        <text>cytidine(1402) in 16S rRNA + S-adenosyl-L-methionine = N(4)-methylcytidine(1402) in 16S rRNA + S-adenosyl-L-homocysteine + H(+)</text>
        <dbReference type="Rhea" id="RHEA:42928"/>
        <dbReference type="Rhea" id="RHEA-COMP:10286"/>
        <dbReference type="Rhea" id="RHEA-COMP:10287"/>
        <dbReference type="ChEBI" id="CHEBI:15378"/>
        <dbReference type="ChEBI" id="CHEBI:57856"/>
        <dbReference type="ChEBI" id="CHEBI:59789"/>
        <dbReference type="ChEBI" id="CHEBI:74506"/>
        <dbReference type="ChEBI" id="CHEBI:82748"/>
        <dbReference type="EC" id="2.1.1.199"/>
    </reaction>
</comment>
<comment type="subcellular location">
    <subcellularLocation>
        <location evidence="1">Cytoplasm</location>
    </subcellularLocation>
</comment>
<comment type="similarity">
    <text evidence="1">Belongs to the methyltransferase superfamily. RsmH family.</text>
</comment>
<accession>B0V8N7</accession>
<organism>
    <name type="scientific">Acinetobacter baumannii (strain AYE)</name>
    <dbReference type="NCBI Taxonomy" id="509173"/>
    <lineage>
        <taxon>Bacteria</taxon>
        <taxon>Pseudomonadati</taxon>
        <taxon>Pseudomonadota</taxon>
        <taxon>Gammaproteobacteria</taxon>
        <taxon>Moraxellales</taxon>
        <taxon>Moraxellaceae</taxon>
        <taxon>Acinetobacter</taxon>
        <taxon>Acinetobacter calcoaceticus/baumannii complex</taxon>
    </lineage>
</organism>
<name>RSMH_ACIBY</name>
<gene>
    <name evidence="1" type="primary">rsmH</name>
    <name type="synonym">mraW</name>
    <name type="ordered locus">ABAYE0280</name>
</gene>
<evidence type="ECO:0000255" key="1">
    <source>
        <dbReference type="HAMAP-Rule" id="MF_01007"/>
    </source>
</evidence>
<dbReference type="EC" id="2.1.1.199" evidence="1"/>
<dbReference type="EMBL" id="CU459141">
    <property type="protein sequence ID" value="CAM85260.1"/>
    <property type="molecule type" value="Genomic_DNA"/>
</dbReference>
<dbReference type="RefSeq" id="WP_000018346.1">
    <property type="nucleotide sequence ID" value="NZ_JBDGFB010000011.1"/>
</dbReference>
<dbReference type="SMR" id="B0V8N7"/>
<dbReference type="EnsemblBacteria" id="CAM85260">
    <property type="protein sequence ID" value="CAM85260"/>
    <property type="gene ID" value="ABAYE0280"/>
</dbReference>
<dbReference type="GeneID" id="92895440"/>
<dbReference type="KEGG" id="aby:ABAYE0280"/>
<dbReference type="HOGENOM" id="CLU_038422_2_0_6"/>
<dbReference type="GO" id="GO:0005737">
    <property type="term" value="C:cytoplasm"/>
    <property type="evidence" value="ECO:0007669"/>
    <property type="project" value="UniProtKB-SubCell"/>
</dbReference>
<dbReference type="GO" id="GO:0071424">
    <property type="term" value="F:rRNA (cytosine-N4-)-methyltransferase activity"/>
    <property type="evidence" value="ECO:0007669"/>
    <property type="project" value="UniProtKB-UniRule"/>
</dbReference>
<dbReference type="GO" id="GO:0070475">
    <property type="term" value="P:rRNA base methylation"/>
    <property type="evidence" value="ECO:0007669"/>
    <property type="project" value="UniProtKB-UniRule"/>
</dbReference>
<dbReference type="CDD" id="cd02440">
    <property type="entry name" value="AdoMet_MTases"/>
    <property type="match status" value="1"/>
</dbReference>
<dbReference type="FunFam" id="1.10.150.170:FF:000001">
    <property type="entry name" value="Ribosomal RNA small subunit methyltransferase H"/>
    <property type="match status" value="1"/>
</dbReference>
<dbReference type="Gene3D" id="1.10.150.170">
    <property type="entry name" value="Putative methyltransferase TM0872, insert domain"/>
    <property type="match status" value="1"/>
</dbReference>
<dbReference type="Gene3D" id="3.40.50.150">
    <property type="entry name" value="Vaccinia Virus protein VP39"/>
    <property type="match status" value="1"/>
</dbReference>
<dbReference type="HAMAP" id="MF_01007">
    <property type="entry name" value="16SrRNA_methyltr_H"/>
    <property type="match status" value="1"/>
</dbReference>
<dbReference type="InterPro" id="IPR002903">
    <property type="entry name" value="RsmH"/>
</dbReference>
<dbReference type="InterPro" id="IPR023397">
    <property type="entry name" value="SAM-dep_MeTrfase_MraW_recog"/>
</dbReference>
<dbReference type="InterPro" id="IPR029063">
    <property type="entry name" value="SAM-dependent_MTases_sf"/>
</dbReference>
<dbReference type="NCBIfam" id="TIGR00006">
    <property type="entry name" value="16S rRNA (cytosine(1402)-N(4))-methyltransferase RsmH"/>
    <property type="match status" value="1"/>
</dbReference>
<dbReference type="PANTHER" id="PTHR11265:SF0">
    <property type="entry name" value="12S RRNA N4-METHYLCYTIDINE METHYLTRANSFERASE"/>
    <property type="match status" value="1"/>
</dbReference>
<dbReference type="PANTHER" id="PTHR11265">
    <property type="entry name" value="S-ADENOSYL-METHYLTRANSFERASE MRAW"/>
    <property type="match status" value="1"/>
</dbReference>
<dbReference type="Pfam" id="PF01795">
    <property type="entry name" value="Methyltransf_5"/>
    <property type="match status" value="1"/>
</dbReference>
<dbReference type="PIRSF" id="PIRSF004486">
    <property type="entry name" value="MraW"/>
    <property type="match status" value="1"/>
</dbReference>
<dbReference type="SUPFAM" id="SSF81799">
    <property type="entry name" value="Putative methyltransferase TM0872, insert domain"/>
    <property type="match status" value="1"/>
</dbReference>
<dbReference type="SUPFAM" id="SSF53335">
    <property type="entry name" value="S-adenosyl-L-methionine-dependent methyltransferases"/>
    <property type="match status" value="1"/>
</dbReference>
<proteinExistence type="inferred from homology"/>
<reference key="1">
    <citation type="journal article" date="2008" name="PLoS ONE">
        <title>Comparative analysis of Acinetobacters: three genomes for three lifestyles.</title>
        <authorList>
            <person name="Vallenet D."/>
            <person name="Nordmann P."/>
            <person name="Barbe V."/>
            <person name="Poirel L."/>
            <person name="Mangenot S."/>
            <person name="Bataille E."/>
            <person name="Dossat C."/>
            <person name="Gas S."/>
            <person name="Kreimeyer A."/>
            <person name="Lenoble P."/>
            <person name="Oztas S."/>
            <person name="Poulain J."/>
            <person name="Segurens B."/>
            <person name="Robert C."/>
            <person name="Abergel C."/>
            <person name="Claverie J.-M."/>
            <person name="Raoult D."/>
            <person name="Medigue C."/>
            <person name="Weissenbach J."/>
            <person name="Cruveiller S."/>
        </authorList>
    </citation>
    <scope>NUCLEOTIDE SEQUENCE [LARGE SCALE GENOMIC DNA]</scope>
    <source>
        <strain>AYE</strain>
    </source>
</reference>
<sequence length="307" mass="34670">MSHISVLLFETVESLLADRTTGVYIDATFGRGGHTRLLLSKLDENARVYAFDKDPQALEVAAALAQEDPRFTIIHASFADIKEKMQEIGVQSVDGIMADLGVSSPQLDQAERGFSFMQDGPLDMRMDNSKGLTAAEWLLEVEEEDLANIIYQYGEERYSRRIARAIKQAGKLDTTAQLAEIVKTAHPKWEKHKHPATRTFQAIRIAINKELDDIEVFLPQAVDLLKPKGRLSVISFHSLEDRLIKQFIQKESTLAEDSGWGMPQQQVDTRRLKKISRVRASEEEVKANPRSRSAWLRVAERLEQKGA</sequence>
<feature type="chain" id="PRO_0000386692" description="Ribosomal RNA small subunit methyltransferase H">
    <location>
        <begin position="1"/>
        <end position="307"/>
    </location>
</feature>
<feature type="binding site" evidence="1">
    <location>
        <begin position="32"/>
        <end position="34"/>
    </location>
    <ligand>
        <name>S-adenosyl-L-methionine</name>
        <dbReference type="ChEBI" id="CHEBI:59789"/>
    </ligand>
</feature>
<feature type="binding site" evidence="1">
    <location>
        <position position="52"/>
    </location>
    <ligand>
        <name>S-adenosyl-L-methionine</name>
        <dbReference type="ChEBI" id="CHEBI:59789"/>
    </ligand>
</feature>
<feature type="binding site" evidence="1">
    <location>
        <position position="78"/>
    </location>
    <ligand>
        <name>S-adenosyl-L-methionine</name>
        <dbReference type="ChEBI" id="CHEBI:59789"/>
    </ligand>
</feature>
<feature type="binding site" evidence="1">
    <location>
        <position position="99"/>
    </location>
    <ligand>
        <name>S-adenosyl-L-methionine</name>
        <dbReference type="ChEBI" id="CHEBI:59789"/>
    </ligand>
</feature>
<feature type="binding site" evidence="1">
    <location>
        <position position="106"/>
    </location>
    <ligand>
        <name>S-adenosyl-L-methionine</name>
        <dbReference type="ChEBI" id="CHEBI:59789"/>
    </ligand>
</feature>
<protein>
    <recommendedName>
        <fullName evidence="1">Ribosomal RNA small subunit methyltransferase H</fullName>
        <ecNumber evidence="1">2.1.1.199</ecNumber>
    </recommendedName>
    <alternativeName>
        <fullName evidence="1">16S rRNA m(4)C1402 methyltransferase</fullName>
    </alternativeName>
    <alternativeName>
        <fullName evidence="1">rRNA (cytosine-N(4)-)-methyltransferase RsmH</fullName>
    </alternativeName>
</protein>